<organism>
    <name type="scientific">Pongo abelii</name>
    <name type="common">Sumatran orangutan</name>
    <name type="synonym">Pongo pygmaeus abelii</name>
    <dbReference type="NCBI Taxonomy" id="9601"/>
    <lineage>
        <taxon>Eukaryota</taxon>
        <taxon>Metazoa</taxon>
        <taxon>Chordata</taxon>
        <taxon>Craniata</taxon>
        <taxon>Vertebrata</taxon>
        <taxon>Euteleostomi</taxon>
        <taxon>Mammalia</taxon>
        <taxon>Eutheria</taxon>
        <taxon>Euarchontoglires</taxon>
        <taxon>Primates</taxon>
        <taxon>Haplorrhini</taxon>
        <taxon>Catarrhini</taxon>
        <taxon>Hominidae</taxon>
        <taxon>Pongo</taxon>
    </lineage>
</organism>
<keyword id="KW-0007">Acetylation</keyword>
<keyword id="KW-0539">Nucleus</keyword>
<keyword id="KW-0597">Phosphoprotein</keyword>
<keyword id="KW-1185">Reference proteome</keyword>
<keyword id="KW-0804">Transcription</keyword>
<keyword id="KW-0805">Transcription regulation</keyword>
<protein>
    <recommendedName>
        <fullName>Transcription initiation factor IIA subunit 1</fullName>
    </recommendedName>
    <alternativeName>
        <fullName>General transcription factor IIA subunit 1</fullName>
    </alternativeName>
    <component>
        <recommendedName>
            <fullName>Transcription initiation factor IIA alpha chain</fullName>
        </recommendedName>
        <alternativeName>
            <fullName>TFIIA p35 subunit</fullName>
        </alternativeName>
    </component>
    <component>
        <recommendedName>
            <fullName>Transcription initiation factor IIA beta chain</fullName>
        </recommendedName>
        <alternativeName>
            <fullName>TFIIA p19 subunit</fullName>
        </alternativeName>
    </component>
</protein>
<proteinExistence type="evidence at transcript level"/>
<feature type="initiator methionine" description="Removed" evidence="2">
    <location>
        <position position="1"/>
    </location>
</feature>
<feature type="chain" id="PRO_0000042598" description="Transcription initiation factor IIA subunit 1">
    <location>
        <begin position="2"/>
        <end position="376"/>
    </location>
</feature>
<feature type="chain" id="PRO_0000042599" description="Transcription initiation factor IIA alpha chain">
    <location>
        <begin position="2"/>
        <end position="274"/>
    </location>
</feature>
<feature type="chain" id="PRO_0000042600" description="Transcription initiation factor IIA beta chain">
    <location>
        <begin position="275"/>
        <end position="376"/>
    </location>
</feature>
<feature type="region of interest" description="Disordered" evidence="3">
    <location>
        <begin position="69"/>
        <end position="107"/>
    </location>
</feature>
<feature type="region of interest" description="Disordered" evidence="3">
    <location>
        <begin position="246"/>
        <end position="265"/>
    </location>
</feature>
<feature type="region of interest" description="Disordered" evidence="3">
    <location>
        <begin position="274"/>
        <end position="329"/>
    </location>
</feature>
<feature type="compositionally biased region" description="Low complexity" evidence="3">
    <location>
        <begin position="69"/>
        <end position="79"/>
    </location>
</feature>
<feature type="compositionally biased region" description="Low complexity" evidence="3">
    <location>
        <begin position="89"/>
        <end position="105"/>
    </location>
</feature>
<feature type="compositionally biased region" description="Acidic residues" evidence="3">
    <location>
        <begin position="280"/>
        <end position="329"/>
    </location>
</feature>
<feature type="binding site" evidence="2">
    <location>
        <position position="343"/>
    </location>
    <ligand>
        <name>DNA</name>
        <dbReference type="ChEBI" id="CHEBI:16991"/>
    </ligand>
</feature>
<feature type="binding site" evidence="2">
    <location>
        <position position="344"/>
    </location>
    <ligand>
        <name>DNA</name>
        <dbReference type="ChEBI" id="CHEBI:16991"/>
    </ligand>
</feature>
<feature type="site" description="Cleavage; by TASP1">
    <location>
        <begin position="274"/>
        <end position="275"/>
    </location>
</feature>
<feature type="modified residue" description="N-acetylalanine" evidence="2">
    <location>
        <position position="2"/>
    </location>
</feature>
<feature type="modified residue" description="Phosphoserine; by TAF1" evidence="2">
    <location>
        <position position="280"/>
    </location>
</feature>
<feature type="modified residue" description="Phosphoserine; by TAF1" evidence="2">
    <location>
        <position position="281"/>
    </location>
</feature>
<feature type="modified residue" description="Phosphoserine; by TAF1" evidence="2">
    <location>
        <position position="316"/>
    </location>
</feature>
<feature type="modified residue" description="Phosphoserine; by TAF1" evidence="2">
    <location>
        <position position="321"/>
    </location>
</feature>
<reference key="1">
    <citation type="submission" date="2004-11" db="EMBL/GenBank/DDBJ databases">
        <authorList>
            <consortium name="The German cDNA consortium"/>
        </authorList>
    </citation>
    <scope>NUCLEOTIDE SEQUENCE [LARGE SCALE MRNA]</scope>
    <source>
        <tissue>Kidney</tissue>
    </source>
</reference>
<gene>
    <name type="primary">GTF2A1</name>
</gene>
<name>TF2AA_PONAB</name>
<sequence>MANSANTNTVPKLYRSVIEDVINDVRDIFLDDGVDEQVLMELKTLWENKLMQSRAVDGFHSEEQQLLLQVQQQHQPQQQQHHHHHHHQQAQPQQTVPQQAQTQQVLIPASQQATAPQVIVPDSKLIQHMNASNMSAAATAATLALPAGVTPVQQILTNSGQLLQVVRVANGAQYIFQPQQSVVLQQQVIPQMQPGGVQAPVIQQVLAPLPGGISPQTGVIIQPQQILFTGNKTQVIPTTVAAPTPAQAQITATGHQQPQAQPAQTQAPLVLQVDGTGDTSSEEDEDEEEDYDDDEEEDKEKDGAEDGQVEEEPLNSEDDVSDEEGQELFDTENVVVCQYDKIHRSKNKWKFHLKDGIMNLNGRDYIFSKAIGDAEW</sequence>
<evidence type="ECO:0000250" key="1"/>
<evidence type="ECO:0000250" key="2">
    <source>
        <dbReference type="UniProtKB" id="P52655"/>
    </source>
</evidence>
<evidence type="ECO:0000256" key="3">
    <source>
        <dbReference type="SAM" id="MobiDB-lite"/>
    </source>
</evidence>
<evidence type="ECO:0000305" key="4"/>
<accession>Q5RCU0</accession>
<comment type="function">
    <text evidence="1">TFIIA is a component of the transcription machinery of RNA polymerase II and plays an important role in transcriptional activation. TFIIA in a complex with TBP mediates transcriptional activity (By similarity).</text>
</comment>
<comment type="subunit">
    <text evidence="2">TFIIA is a heterodimer of the large unprocessed subunit 1 and a small subunit gamma. It was originally believed to be a heterotrimer of an alpha (p35), a beta (p19) and a gamma subunit (p12). TFIIA forms a complex with TBP. Part of TBP-based Pol II pre-initiation complex (PIC), in which Pol II core assembles with general transcription factors and other specific initiation factors including GTF2E1, GTF2E2, GTF2F1, GTF2F2, TCEA1, ERCC2, ERCC3, GTF2H2, GTF2H3, GTF2H4, GTF2H5, GTF2A1, GTF2A2, GTF2B and TBP; this large multi-subunit PIC complex mediates DNA unwinding and targets Pol II core to the transcription start site where the first phosphodiester bond forms.</text>
</comment>
<comment type="subcellular location">
    <subcellularLocation>
        <location evidence="1">Nucleus</location>
    </subcellularLocation>
</comment>
<comment type="PTM">
    <text evidence="1">The alpha and beta subunits are postranslationally produced from the precursor formby TASP1. The cleavage promotes proteasomal degradation (By similarity).</text>
</comment>
<comment type="similarity">
    <text evidence="4">Belongs to the TFIIA subunit 1 family.</text>
</comment>
<dbReference type="EMBL" id="CR858178">
    <property type="protein sequence ID" value="CAH90417.1"/>
    <property type="molecule type" value="mRNA"/>
</dbReference>
<dbReference type="RefSeq" id="NP_001125209.1">
    <property type="nucleotide sequence ID" value="NM_001131737.1"/>
</dbReference>
<dbReference type="STRING" id="9601.ENSPPYP00000006871"/>
<dbReference type="GeneID" id="100172100"/>
<dbReference type="KEGG" id="pon:100172100"/>
<dbReference type="CTD" id="2957"/>
<dbReference type="eggNOG" id="KOG2652">
    <property type="taxonomic scope" value="Eukaryota"/>
</dbReference>
<dbReference type="InParanoid" id="Q5RCU0"/>
<dbReference type="OrthoDB" id="6275927at2759"/>
<dbReference type="Proteomes" id="UP000001595">
    <property type="component" value="Unplaced"/>
</dbReference>
<dbReference type="GO" id="GO:0005672">
    <property type="term" value="C:transcription factor TFIIA complex"/>
    <property type="evidence" value="ECO:0007669"/>
    <property type="project" value="InterPro"/>
</dbReference>
<dbReference type="GO" id="GO:0006367">
    <property type="term" value="P:transcription initiation at RNA polymerase II promoter"/>
    <property type="evidence" value="ECO:0007669"/>
    <property type="project" value="InterPro"/>
</dbReference>
<dbReference type="CDD" id="cd07976">
    <property type="entry name" value="TFIIA_alpha_beta_like"/>
    <property type="match status" value="2"/>
</dbReference>
<dbReference type="FunFam" id="1.10.287.100:FF:000001">
    <property type="entry name" value="Transcription initiation factor IIA subunit"/>
    <property type="match status" value="1"/>
</dbReference>
<dbReference type="FunFam" id="2.30.18.10:FF:000002">
    <property type="entry name" value="Transcription initiation factor IIA subunit 1"/>
    <property type="match status" value="1"/>
</dbReference>
<dbReference type="Gene3D" id="1.10.287.100">
    <property type="match status" value="1"/>
</dbReference>
<dbReference type="Gene3D" id="2.30.18.10">
    <property type="entry name" value="Transcription factor IIA (TFIIA), beta-barrel domain"/>
    <property type="match status" value="1"/>
</dbReference>
<dbReference type="InterPro" id="IPR004855">
    <property type="entry name" value="TFIIA_asu/bsu"/>
</dbReference>
<dbReference type="InterPro" id="IPR009088">
    <property type="entry name" value="TFIIA_b-brl"/>
</dbReference>
<dbReference type="PANTHER" id="PTHR12694">
    <property type="entry name" value="TRANSCRIPTION INITIATION FACTOR IIA SUBUNIT 1"/>
    <property type="match status" value="1"/>
</dbReference>
<dbReference type="PANTHER" id="PTHR12694:SF7">
    <property type="entry name" value="TRANSCRIPTION INITIATION FACTOR IIA SUBUNIT 1"/>
    <property type="match status" value="1"/>
</dbReference>
<dbReference type="Pfam" id="PF03153">
    <property type="entry name" value="TFIIA"/>
    <property type="match status" value="2"/>
</dbReference>
<dbReference type="SMART" id="SM01371">
    <property type="entry name" value="TFIIA"/>
    <property type="match status" value="1"/>
</dbReference>
<dbReference type="SUPFAM" id="SSF47396">
    <property type="entry name" value="Transcription factor IIA (TFIIA), alpha-helical domain"/>
    <property type="match status" value="1"/>
</dbReference>
<dbReference type="SUPFAM" id="SSF50784">
    <property type="entry name" value="Transcription factor IIA (TFIIA), beta-barrel domain"/>
    <property type="match status" value="1"/>
</dbReference>